<accession>B4S1A6</accession>
<accession>F2G7G5</accession>
<keyword id="KW-0413">Isomerase</keyword>
<keyword id="KW-0663">Pyridoxal phosphate</keyword>
<sequence>MSRQTQAIIHADALLHNFKALAAIAPSSQSMAVVKADAYGHGAVNVARILQHVSSQFAVAIIEEAIALRDAGISAPVVVLEGAHQAKECQMAFQHNCILVMHCEEQLQWLNNCPENQRPHIWLKVDSGMHRLGFAISDIEDMTKKYRHLLSEQTVIATHFACADDVDNGFTASQLSAFKRVADAIGLPTSVANSPATVNWPASRNAWNRLGVGVYGGAVSTANNVGVEIYPAMTLRSSILAVRTIAAGEGVGYGQRWVASKPSKIATVGIGYADGYPRHCKNKTPVMVRGKRAFLAGRVSMDMITIDVTHIDNVSVGDEVELWGQNVPIQEVAACADTIDYELMTRVSQRVPRIVKYL</sequence>
<evidence type="ECO:0000255" key="1">
    <source>
        <dbReference type="HAMAP-Rule" id="MF_01201"/>
    </source>
</evidence>
<reference key="1">
    <citation type="journal article" date="2008" name="ISME J.">
        <title>Comparative genomics of two ecotypes of the marine planktonic copiotroph Alteromonas macleodii suggests alternative lifestyles associated with different kinds of particulate organic matter.</title>
        <authorList>
            <person name="Ivars-Martinez E."/>
            <person name="Martin-Cuadrado A.-B."/>
            <person name="D'Auria G."/>
            <person name="Mira A."/>
            <person name="Ferriera S."/>
            <person name="Johnson J."/>
            <person name="Friedman R."/>
            <person name="Rodriguez-Valera F."/>
        </authorList>
    </citation>
    <scope>NUCLEOTIDE SEQUENCE [LARGE SCALE GENOMIC DNA]</scope>
    <source>
        <strain>DSM 17117 / CIP 110805 / LMG 28347 / Deep ecotype</strain>
    </source>
</reference>
<protein>
    <recommendedName>
        <fullName evidence="1">Alanine racemase</fullName>
        <ecNumber evidence="1">5.1.1.1</ecNumber>
    </recommendedName>
</protein>
<gene>
    <name type="primary">alr</name>
    <name type="ordered locus">MADE_1002985</name>
</gene>
<dbReference type="EC" id="5.1.1.1" evidence="1"/>
<dbReference type="EMBL" id="CP001103">
    <property type="protein sequence ID" value="AEA96745.1"/>
    <property type="molecule type" value="Genomic_DNA"/>
</dbReference>
<dbReference type="RefSeq" id="WP_012517100.1">
    <property type="nucleotide sequence ID" value="NC_011138.3"/>
</dbReference>
<dbReference type="SMR" id="B4S1A6"/>
<dbReference type="KEGG" id="amc:MADE_1002985"/>
<dbReference type="HOGENOM" id="CLU_028393_1_0_6"/>
<dbReference type="UniPathway" id="UPA00042">
    <property type="reaction ID" value="UER00497"/>
</dbReference>
<dbReference type="Proteomes" id="UP000001870">
    <property type="component" value="Chromosome"/>
</dbReference>
<dbReference type="GO" id="GO:0005829">
    <property type="term" value="C:cytosol"/>
    <property type="evidence" value="ECO:0007669"/>
    <property type="project" value="TreeGrafter"/>
</dbReference>
<dbReference type="GO" id="GO:0008784">
    <property type="term" value="F:alanine racemase activity"/>
    <property type="evidence" value="ECO:0007669"/>
    <property type="project" value="UniProtKB-UniRule"/>
</dbReference>
<dbReference type="GO" id="GO:0030170">
    <property type="term" value="F:pyridoxal phosphate binding"/>
    <property type="evidence" value="ECO:0007669"/>
    <property type="project" value="UniProtKB-UniRule"/>
</dbReference>
<dbReference type="GO" id="GO:0030632">
    <property type="term" value="P:D-alanine biosynthetic process"/>
    <property type="evidence" value="ECO:0007669"/>
    <property type="project" value="UniProtKB-UniRule"/>
</dbReference>
<dbReference type="FunFam" id="3.20.20.10:FF:000002">
    <property type="entry name" value="Alanine racemase"/>
    <property type="match status" value="1"/>
</dbReference>
<dbReference type="Gene3D" id="3.20.20.10">
    <property type="entry name" value="Alanine racemase"/>
    <property type="match status" value="1"/>
</dbReference>
<dbReference type="Gene3D" id="2.40.37.10">
    <property type="entry name" value="Lyase, Ornithine Decarboxylase, Chain A, domain 1"/>
    <property type="match status" value="1"/>
</dbReference>
<dbReference type="HAMAP" id="MF_01201">
    <property type="entry name" value="Ala_racemase"/>
    <property type="match status" value="1"/>
</dbReference>
<dbReference type="InterPro" id="IPR000821">
    <property type="entry name" value="Ala_racemase"/>
</dbReference>
<dbReference type="InterPro" id="IPR009006">
    <property type="entry name" value="Ala_racemase/Decarboxylase_C"/>
</dbReference>
<dbReference type="InterPro" id="IPR011079">
    <property type="entry name" value="Ala_racemase_C"/>
</dbReference>
<dbReference type="InterPro" id="IPR001608">
    <property type="entry name" value="Ala_racemase_N"/>
</dbReference>
<dbReference type="InterPro" id="IPR020622">
    <property type="entry name" value="Ala_racemase_pyridoxalP-BS"/>
</dbReference>
<dbReference type="InterPro" id="IPR029066">
    <property type="entry name" value="PLP-binding_barrel"/>
</dbReference>
<dbReference type="NCBIfam" id="TIGR00492">
    <property type="entry name" value="alr"/>
    <property type="match status" value="1"/>
</dbReference>
<dbReference type="PANTHER" id="PTHR30511">
    <property type="entry name" value="ALANINE RACEMASE"/>
    <property type="match status" value="1"/>
</dbReference>
<dbReference type="PANTHER" id="PTHR30511:SF0">
    <property type="entry name" value="ALANINE RACEMASE, CATABOLIC-RELATED"/>
    <property type="match status" value="1"/>
</dbReference>
<dbReference type="Pfam" id="PF00842">
    <property type="entry name" value="Ala_racemase_C"/>
    <property type="match status" value="1"/>
</dbReference>
<dbReference type="Pfam" id="PF01168">
    <property type="entry name" value="Ala_racemase_N"/>
    <property type="match status" value="1"/>
</dbReference>
<dbReference type="PRINTS" id="PR00992">
    <property type="entry name" value="ALARACEMASE"/>
</dbReference>
<dbReference type="SMART" id="SM01005">
    <property type="entry name" value="Ala_racemase_C"/>
    <property type="match status" value="1"/>
</dbReference>
<dbReference type="SUPFAM" id="SSF50621">
    <property type="entry name" value="Alanine racemase C-terminal domain-like"/>
    <property type="match status" value="1"/>
</dbReference>
<dbReference type="SUPFAM" id="SSF51419">
    <property type="entry name" value="PLP-binding barrel"/>
    <property type="match status" value="1"/>
</dbReference>
<dbReference type="PROSITE" id="PS00395">
    <property type="entry name" value="ALANINE_RACEMASE"/>
    <property type="match status" value="1"/>
</dbReference>
<feature type="chain" id="PRO_1000164590" description="Alanine racemase">
    <location>
        <begin position="1"/>
        <end position="358"/>
    </location>
</feature>
<feature type="active site" description="Proton acceptor; specific for D-alanine" evidence="1">
    <location>
        <position position="35"/>
    </location>
</feature>
<feature type="active site" description="Proton acceptor; specific for L-alanine" evidence="1">
    <location>
        <position position="253"/>
    </location>
</feature>
<feature type="binding site" evidence="1">
    <location>
        <position position="131"/>
    </location>
    <ligand>
        <name>substrate</name>
    </ligand>
</feature>
<feature type="binding site" evidence="1">
    <location>
        <position position="301"/>
    </location>
    <ligand>
        <name>substrate</name>
    </ligand>
</feature>
<feature type="modified residue" description="N6-(pyridoxal phosphate)lysine" evidence="1">
    <location>
        <position position="35"/>
    </location>
</feature>
<proteinExistence type="inferred from homology"/>
<comment type="function">
    <text evidence="1">Catalyzes the interconversion of L-alanine and D-alanine. May also act on other amino acids.</text>
</comment>
<comment type="catalytic activity">
    <reaction evidence="1">
        <text>L-alanine = D-alanine</text>
        <dbReference type="Rhea" id="RHEA:20249"/>
        <dbReference type="ChEBI" id="CHEBI:57416"/>
        <dbReference type="ChEBI" id="CHEBI:57972"/>
        <dbReference type="EC" id="5.1.1.1"/>
    </reaction>
</comment>
<comment type="cofactor">
    <cofactor evidence="1">
        <name>pyridoxal 5'-phosphate</name>
        <dbReference type="ChEBI" id="CHEBI:597326"/>
    </cofactor>
</comment>
<comment type="pathway">
    <text evidence="1">Amino-acid biosynthesis; D-alanine biosynthesis; D-alanine from L-alanine: step 1/1.</text>
</comment>
<comment type="similarity">
    <text evidence="1">Belongs to the alanine racemase family.</text>
</comment>
<name>ALR_ALTMD</name>
<organism>
    <name type="scientific">Alteromonas mediterranea (strain DSM 17117 / CIP 110805 / LMG 28347 / Deep ecotype)</name>
    <dbReference type="NCBI Taxonomy" id="1774373"/>
    <lineage>
        <taxon>Bacteria</taxon>
        <taxon>Pseudomonadati</taxon>
        <taxon>Pseudomonadota</taxon>
        <taxon>Gammaproteobacteria</taxon>
        <taxon>Alteromonadales</taxon>
        <taxon>Alteromonadaceae</taxon>
        <taxon>Alteromonas/Salinimonas group</taxon>
        <taxon>Alteromonas</taxon>
    </lineage>
</organism>